<organism>
    <name type="scientific">Thermosipho africanus (strain TCF52B)</name>
    <dbReference type="NCBI Taxonomy" id="484019"/>
    <lineage>
        <taxon>Bacteria</taxon>
        <taxon>Thermotogati</taxon>
        <taxon>Thermotogota</taxon>
        <taxon>Thermotogae</taxon>
        <taxon>Thermotogales</taxon>
        <taxon>Fervidobacteriaceae</taxon>
        <taxon>Thermosipho</taxon>
    </lineage>
</organism>
<accession>B7IEQ3</accession>
<proteinExistence type="inferred from homology"/>
<evidence type="ECO:0000255" key="1">
    <source>
        <dbReference type="HAMAP-Rule" id="MF_00402"/>
    </source>
</evidence>
<evidence type="ECO:0000305" key="2"/>
<name>RL19_THEAB</name>
<sequence>MSMDNLVRIIEKDQIKDVPEFRPGDTVKVYVRFKEGNKERTQAFEGIVISMRGSGISKTFTVRRIGANGIGVERIFPLYAPIIEKIEVVRRGKVRRAKLYYLREVRGKVKIKERR</sequence>
<dbReference type="EMBL" id="CP001185">
    <property type="protein sequence ID" value="ACJ74567.1"/>
    <property type="molecule type" value="Genomic_DNA"/>
</dbReference>
<dbReference type="RefSeq" id="WP_012579323.1">
    <property type="nucleotide sequence ID" value="NC_011653.1"/>
</dbReference>
<dbReference type="SMR" id="B7IEQ3"/>
<dbReference type="STRING" id="484019.THA_59"/>
<dbReference type="KEGG" id="taf:THA_59"/>
<dbReference type="eggNOG" id="COG0335">
    <property type="taxonomic scope" value="Bacteria"/>
</dbReference>
<dbReference type="HOGENOM" id="CLU_103507_2_1_0"/>
<dbReference type="OrthoDB" id="9803541at2"/>
<dbReference type="Proteomes" id="UP000002453">
    <property type="component" value="Chromosome"/>
</dbReference>
<dbReference type="GO" id="GO:0022625">
    <property type="term" value="C:cytosolic large ribosomal subunit"/>
    <property type="evidence" value="ECO:0007669"/>
    <property type="project" value="TreeGrafter"/>
</dbReference>
<dbReference type="GO" id="GO:0003735">
    <property type="term" value="F:structural constituent of ribosome"/>
    <property type="evidence" value="ECO:0007669"/>
    <property type="project" value="InterPro"/>
</dbReference>
<dbReference type="GO" id="GO:0006412">
    <property type="term" value="P:translation"/>
    <property type="evidence" value="ECO:0007669"/>
    <property type="project" value="UniProtKB-UniRule"/>
</dbReference>
<dbReference type="FunFam" id="2.30.30.790:FF:000001">
    <property type="entry name" value="50S ribosomal protein L19"/>
    <property type="match status" value="1"/>
</dbReference>
<dbReference type="Gene3D" id="2.30.30.790">
    <property type="match status" value="1"/>
</dbReference>
<dbReference type="HAMAP" id="MF_00402">
    <property type="entry name" value="Ribosomal_bL19"/>
    <property type="match status" value="1"/>
</dbReference>
<dbReference type="InterPro" id="IPR001857">
    <property type="entry name" value="Ribosomal_bL19"/>
</dbReference>
<dbReference type="InterPro" id="IPR018257">
    <property type="entry name" value="Ribosomal_bL19_CS"/>
</dbReference>
<dbReference type="InterPro" id="IPR038657">
    <property type="entry name" value="Ribosomal_bL19_sf"/>
</dbReference>
<dbReference type="InterPro" id="IPR008991">
    <property type="entry name" value="Translation_prot_SH3-like_sf"/>
</dbReference>
<dbReference type="NCBIfam" id="TIGR01024">
    <property type="entry name" value="rplS_bact"/>
    <property type="match status" value="1"/>
</dbReference>
<dbReference type="PANTHER" id="PTHR15680:SF9">
    <property type="entry name" value="LARGE RIBOSOMAL SUBUNIT PROTEIN BL19M"/>
    <property type="match status" value="1"/>
</dbReference>
<dbReference type="PANTHER" id="PTHR15680">
    <property type="entry name" value="RIBOSOMAL PROTEIN L19"/>
    <property type="match status" value="1"/>
</dbReference>
<dbReference type="Pfam" id="PF01245">
    <property type="entry name" value="Ribosomal_L19"/>
    <property type="match status" value="1"/>
</dbReference>
<dbReference type="PIRSF" id="PIRSF002191">
    <property type="entry name" value="Ribosomal_L19"/>
    <property type="match status" value="1"/>
</dbReference>
<dbReference type="PRINTS" id="PR00061">
    <property type="entry name" value="RIBOSOMALL19"/>
</dbReference>
<dbReference type="SUPFAM" id="SSF50104">
    <property type="entry name" value="Translation proteins SH3-like domain"/>
    <property type="match status" value="1"/>
</dbReference>
<dbReference type="PROSITE" id="PS01015">
    <property type="entry name" value="RIBOSOMAL_L19"/>
    <property type="match status" value="1"/>
</dbReference>
<feature type="chain" id="PRO_1000193910" description="Large ribosomal subunit protein bL19">
    <location>
        <begin position="1"/>
        <end position="115"/>
    </location>
</feature>
<keyword id="KW-1185">Reference proteome</keyword>
<keyword id="KW-0687">Ribonucleoprotein</keyword>
<keyword id="KW-0689">Ribosomal protein</keyword>
<comment type="function">
    <text evidence="1">This protein is located at the 30S-50S ribosomal subunit interface and may play a role in the structure and function of the aminoacyl-tRNA binding site.</text>
</comment>
<comment type="similarity">
    <text evidence="1">Belongs to the bacterial ribosomal protein bL19 family.</text>
</comment>
<gene>
    <name evidence="1" type="primary">rplS</name>
    <name type="ordered locus">THA_59</name>
</gene>
<protein>
    <recommendedName>
        <fullName evidence="1">Large ribosomal subunit protein bL19</fullName>
    </recommendedName>
    <alternativeName>
        <fullName evidence="2">50S ribosomal protein L19</fullName>
    </alternativeName>
</protein>
<reference key="1">
    <citation type="journal article" date="2009" name="J. Bacteriol.">
        <title>The genome of Thermosipho africanus TCF52B: lateral genetic connections to the Firmicutes and Archaea.</title>
        <authorList>
            <person name="Nesboe C.L."/>
            <person name="Bapteste E."/>
            <person name="Curtis B."/>
            <person name="Dahle H."/>
            <person name="Lopez P."/>
            <person name="Macleod D."/>
            <person name="Dlutek M."/>
            <person name="Bowman S."/>
            <person name="Zhaxybayeva O."/>
            <person name="Birkeland N.-K."/>
            <person name="Doolittle W.F."/>
        </authorList>
    </citation>
    <scope>NUCLEOTIDE SEQUENCE [LARGE SCALE GENOMIC DNA]</scope>
    <source>
        <strain>TCF52B</strain>
    </source>
</reference>